<protein>
    <recommendedName>
        <fullName evidence="1">Ribonuclease P protein component</fullName>
        <shortName evidence="1">RNase P protein</shortName>
        <shortName evidence="1">RNaseP protein</shortName>
        <ecNumber evidence="1">3.1.26.5</ecNumber>
    </recommendedName>
    <alternativeName>
        <fullName evidence="1">Protein C5</fullName>
    </alternativeName>
</protein>
<evidence type="ECO:0000255" key="1">
    <source>
        <dbReference type="HAMAP-Rule" id="MF_00227"/>
    </source>
</evidence>
<gene>
    <name evidence="1" type="primary">rnpA</name>
    <name type="ordered locus">Patl_4314</name>
</gene>
<reference key="1">
    <citation type="submission" date="2006-06" db="EMBL/GenBank/DDBJ databases">
        <title>Complete sequence of Pseudoalteromonas atlantica T6c.</title>
        <authorList>
            <consortium name="US DOE Joint Genome Institute"/>
            <person name="Copeland A."/>
            <person name="Lucas S."/>
            <person name="Lapidus A."/>
            <person name="Barry K."/>
            <person name="Detter J.C."/>
            <person name="Glavina del Rio T."/>
            <person name="Hammon N."/>
            <person name="Israni S."/>
            <person name="Dalin E."/>
            <person name="Tice H."/>
            <person name="Pitluck S."/>
            <person name="Saunders E."/>
            <person name="Brettin T."/>
            <person name="Bruce D."/>
            <person name="Han C."/>
            <person name="Tapia R."/>
            <person name="Gilna P."/>
            <person name="Schmutz J."/>
            <person name="Larimer F."/>
            <person name="Land M."/>
            <person name="Hauser L."/>
            <person name="Kyrpides N."/>
            <person name="Kim E."/>
            <person name="Karls A.C."/>
            <person name="Bartlett D."/>
            <person name="Higgins B.P."/>
            <person name="Richardson P."/>
        </authorList>
    </citation>
    <scope>NUCLEOTIDE SEQUENCE [LARGE SCALE GENOMIC DNA]</scope>
    <source>
        <strain>T6c / ATCC BAA-1087</strain>
    </source>
</reference>
<dbReference type="EC" id="3.1.26.5" evidence="1"/>
<dbReference type="EMBL" id="CP000388">
    <property type="protein sequence ID" value="ABG42813.1"/>
    <property type="molecule type" value="Genomic_DNA"/>
</dbReference>
<dbReference type="RefSeq" id="WP_006994904.1">
    <property type="nucleotide sequence ID" value="NC_008228.1"/>
</dbReference>
<dbReference type="SMR" id="Q15MS5"/>
<dbReference type="STRING" id="342610.Patl_4314"/>
<dbReference type="KEGG" id="pat:Patl_4314"/>
<dbReference type="eggNOG" id="COG0594">
    <property type="taxonomic scope" value="Bacteria"/>
</dbReference>
<dbReference type="HOGENOM" id="CLU_117179_11_0_6"/>
<dbReference type="OrthoDB" id="9796422at2"/>
<dbReference type="Proteomes" id="UP000001981">
    <property type="component" value="Chromosome"/>
</dbReference>
<dbReference type="GO" id="GO:0030677">
    <property type="term" value="C:ribonuclease P complex"/>
    <property type="evidence" value="ECO:0007669"/>
    <property type="project" value="TreeGrafter"/>
</dbReference>
<dbReference type="GO" id="GO:0042781">
    <property type="term" value="F:3'-tRNA processing endoribonuclease activity"/>
    <property type="evidence" value="ECO:0007669"/>
    <property type="project" value="TreeGrafter"/>
</dbReference>
<dbReference type="GO" id="GO:0004526">
    <property type="term" value="F:ribonuclease P activity"/>
    <property type="evidence" value="ECO:0007669"/>
    <property type="project" value="UniProtKB-UniRule"/>
</dbReference>
<dbReference type="GO" id="GO:0000049">
    <property type="term" value="F:tRNA binding"/>
    <property type="evidence" value="ECO:0007669"/>
    <property type="project" value="UniProtKB-UniRule"/>
</dbReference>
<dbReference type="GO" id="GO:0001682">
    <property type="term" value="P:tRNA 5'-leader removal"/>
    <property type="evidence" value="ECO:0007669"/>
    <property type="project" value="UniProtKB-UniRule"/>
</dbReference>
<dbReference type="Gene3D" id="3.30.230.10">
    <property type="match status" value="1"/>
</dbReference>
<dbReference type="HAMAP" id="MF_00227">
    <property type="entry name" value="RNase_P"/>
    <property type="match status" value="1"/>
</dbReference>
<dbReference type="InterPro" id="IPR020568">
    <property type="entry name" value="Ribosomal_Su5_D2-typ_SF"/>
</dbReference>
<dbReference type="InterPro" id="IPR014721">
    <property type="entry name" value="Ribsml_uS5_D2-typ_fold_subgr"/>
</dbReference>
<dbReference type="InterPro" id="IPR000100">
    <property type="entry name" value="RNase_P"/>
</dbReference>
<dbReference type="InterPro" id="IPR020539">
    <property type="entry name" value="RNase_P_CS"/>
</dbReference>
<dbReference type="NCBIfam" id="TIGR00188">
    <property type="entry name" value="rnpA"/>
    <property type="match status" value="1"/>
</dbReference>
<dbReference type="PANTHER" id="PTHR33992">
    <property type="entry name" value="RIBONUCLEASE P PROTEIN COMPONENT"/>
    <property type="match status" value="1"/>
</dbReference>
<dbReference type="PANTHER" id="PTHR33992:SF1">
    <property type="entry name" value="RIBONUCLEASE P PROTEIN COMPONENT"/>
    <property type="match status" value="1"/>
</dbReference>
<dbReference type="Pfam" id="PF00825">
    <property type="entry name" value="Ribonuclease_P"/>
    <property type="match status" value="1"/>
</dbReference>
<dbReference type="SUPFAM" id="SSF54211">
    <property type="entry name" value="Ribosomal protein S5 domain 2-like"/>
    <property type="match status" value="1"/>
</dbReference>
<dbReference type="PROSITE" id="PS00648">
    <property type="entry name" value="RIBONUCLEASE_P"/>
    <property type="match status" value="1"/>
</dbReference>
<organism>
    <name type="scientific">Pseudoalteromonas atlantica (strain T6c / ATCC BAA-1087)</name>
    <dbReference type="NCBI Taxonomy" id="3042615"/>
    <lineage>
        <taxon>Bacteria</taxon>
        <taxon>Pseudomonadati</taxon>
        <taxon>Pseudomonadota</taxon>
        <taxon>Gammaproteobacteria</taxon>
        <taxon>Alteromonadales</taxon>
        <taxon>Alteromonadaceae</taxon>
        <taxon>Paraglaciecola</taxon>
    </lineage>
</organism>
<sequence>MGENSFSRELRLLTPTHFEFVFKNATPAVSPNLTLLARHNDSPNPRLGITVAKKRVKKAHDRNRIKRIVRESFRNHQQSLPNIDIVVVGKSGLDKLSNQELFLVLSKLWKKLAKRCEKSQ</sequence>
<accession>Q15MS5</accession>
<comment type="function">
    <text evidence="1">RNaseP catalyzes the removal of the 5'-leader sequence from pre-tRNA to produce the mature 5'-terminus. It can also cleave other RNA substrates such as 4.5S RNA. The protein component plays an auxiliary but essential role in vivo by binding to the 5'-leader sequence and broadening the substrate specificity of the ribozyme.</text>
</comment>
<comment type="catalytic activity">
    <reaction evidence="1">
        <text>Endonucleolytic cleavage of RNA, removing 5'-extranucleotides from tRNA precursor.</text>
        <dbReference type="EC" id="3.1.26.5"/>
    </reaction>
</comment>
<comment type="subunit">
    <text evidence="1">Consists of a catalytic RNA component (M1 or rnpB) and a protein subunit.</text>
</comment>
<comment type="similarity">
    <text evidence="1">Belongs to the RnpA family.</text>
</comment>
<proteinExistence type="inferred from homology"/>
<name>RNPA_PSEA6</name>
<feature type="chain" id="PRO_1000021443" description="Ribonuclease P protein component">
    <location>
        <begin position="1"/>
        <end position="120"/>
    </location>
</feature>
<keyword id="KW-0255">Endonuclease</keyword>
<keyword id="KW-0378">Hydrolase</keyword>
<keyword id="KW-0540">Nuclease</keyword>
<keyword id="KW-0694">RNA-binding</keyword>
<keyword id="KW-0819">tRNA processing</keyword>